<organismHost>
    <name type="scientific">Crotalaria juncea</name>
    <name type="common">Sunn hemp</name>
    <dbReference type="NCBI Taxonomy" id="3829"/>
</organismHost>
<organismHost>
    <name type="scientific">Lablab purpureus</name>
    <name type="common">Hyacinth bean</name>
    <name type="synonym">Dolichos lablab</name>
    <dbReference type="NCBI Taxonomy" id="35936"/>
</organismHost>
<organismHost>
    <name type="scientific">Mucuna</name>
    <dbReference type="NCBI Taxonomy" id="40336"/>
</organismHost>
<organismHost>
    <name type="scientific">Vigna unguiculata</name>
    <name type="common">Cowpea</name>
    <dbReference type="NCBI Taxonomy" id="3917"/>
</organismHost>
<accession>P89202</accession>
<accession>Q88624</accession>
<dbReference type="EC" id="2.1.1.-"/>
<dbReference type="EC" id="2.7.7.-"/>
<dbReference type="EC" id="2.7.7.48"/>
<dbReference type="EC" id="3.6.4.13"/>
<dbReference type="EMBL" id="U47034">
    <property type="protein sequence ID" value="AAB38492.1"/>
    <property type="molecule type" value="mRNA"/>
</dbReference>
<dbReference type="EMBL" id="J02413">
    <property type="protein sequence ID" value="AAA46585.1"/>
    <property type="molecule type" value="Genomic_RNA"/>
</dbReference>
<dbReference type="Proteomes" id="UP000007218">
    <property type="component" value="Genome"/>
</dbReference>
<dbReference type="GO" id="GO:0005524">
    <property type="term" value="F:ATP binding"/>
    <property type="evidence" value="ECO:0007669"/>
    <property type="project" value="UniProtKB-KW"/>
</dbReference>
<dbReference type="GO" id="GO:0016887">
    <property type="term" value="F:ATP hydrolysis activity"/>
    <property type="evidence" value="ECO:0007669"/>
    <property type="project" value="RHEA"/>
</dbReference>
<dbReference type="GO" id="GO:0008174">
    <property type="term" value="F:mRNA methyltransferase activity"/>
    <property type="evidence" value="ECO:0007669"/>
    <property type="project" value="InterPro"/>
</dbReference>
<dbReference type="GO" id="GO:0003723">
    <property type="term" value="F:RNA binding"/>
    <property type="evidence" value="ECO:0007669"/>
    <property type="project" value="InterPro"/>
</dbReference>
<dbReference type="GO" id="GO:0003724">
    <property type="term" value="F:RNA helicase activity"/>
    <property type="evidence" value="ECO:0007669"/>
    <property type="project" value="UniProtKB-EC"/>
</dbReference>
<dbReference type="GO" id="GO:0003968">
    <property type="term" value="F:RNA-directed RNA polymerase activity"/>
    <property type="evidence" value="ECO:0007669"/>
    <property type="project" value="UniProtKB-KW"/>
</dbReference>
<dbReference type="GO" id="GO:0006351">
    <property type="term" value="P:DNA-templated transcription"/>
    <property type="evidence" value="ECO:0007669"/>
    <property type="project" value="InterPro"/>
</dbReference>
<dbReference type="GO" id="GO:0016556">
    <property type="term" value="P:mRNA modification"/>
    <property type="evidence" value="ECO:0007669"/>
    <property type="project" value="InterPro"/>
</dbReference>
<dbReference type="GO" id="GO:0006396">
    <property type="term" value="P:RNA processing"/>
    <property type="evidence" value="ECO:0007669"/>
    <property type="project" value="InterPro"/>
</dbReference>
<dbReference type="GO" id="GO:0052170">
    <property type="term" value="P:symbiont-mediated suppression of host innate immune response"/>
    <property type="evidence" value="ECO:0007669"/>
    <property type="project" value="UniProtKB-KW"/>
</dbReference>
<dbReference type="GO" id="GO:0039694">
    <property type="term" value="P:viral RNA genome replication"/>
    <property type="evidence" value="ECO:0007669"/>
    <property type="project" value="InterPro"/>
</dbReference>
<dbReference type="Gene3D" id="3.30.450.420">
    <property type="match status" value="1"/>
</dbReference>
<dbReference type="Gene3D" id="3.40.50.300">
    <property type="entry name" value="P-loop containing nucleotide triphosphate hydrolases"/>
    <property type="match status" value="2"/>
</dbReference>
<dbReference type="InterPro" id="IPR027351">
    <property type="entry name" value="(+)RNA_virus_helicase_core_dom"/>
</dbReference>
<dbReference type="InterPro" id="IPR002588">
    <property type="entry name" value="Alphavirus-like_MT_dom"/>
</dbReference>
<dbReference type="InterPro" id="IPR043502">
    <property type="entry name" value="DNA/RNA_pol_sf"/>
</dbReference>
<dbReference type="InterPro" id="IPR027417">
    <property type="entry name" value="P-loop_NTPase"/>
</dbReference>
<dbReference type="InterPro" id="IPR001788">
    <property type="entry name" value="RNA-dep_RNA_pol_alsuvir"/>
</dbReference>
<dbReference type="InterPro" id="IPR007094">
    <property type="entry name" value="RNA-dir_pol_PSvirus"/>
</dbReference>
<dbReference type="Pfam" id="PF00978">
    <property type="entry name" value="RdRP_2"/>
    <property type="match status" value="1"/>
</dbReference>
<dbReference type="Pfam" id="PF01443">
    <property type="entry name" value="Viral_helicase1"/>
    <property type="match status" value="1"/>
</dbReference>
<dbReference type="Pfam" id="PF01660">
    <property type="entry name" value="Vmethyltransf"/>
    <property type="match status" value="1"/>
</dbReference>
<dbReference type="SUPFAM" id="SSF56672">
    <property type="entry name" value="DNA/RNA polymerases"/>
    <property type="match status" value="1"/>
</dbReference>
<dbReference type="SUPFAM" id="SSF52540">
    <property type="entry name" value="P-loop containing nucleoside triphosphate hydrolases"/>
    <property type="match status" value="1"/>
</dbReference>
<dbReference type="PROSITE" id="PS51743">
    <property type="entry name" value="ALPHAVIRUS_MT"/>
    <property type="match status" value="1"/>
</dbReference>
<dbReference type="PROSITE" id="PS51657">
    <property type="entry name" value="PSRV_HELICASE"/>
    <property type="match status" value="1"/>
</dbReference>
<dbReference type="PROSITE" id="PS50507">
    <property type="entry name" value="RDRP_SSRNA_POS"/>
    <property type="match status" value="1"/>
</dbReference>
<keyword id="KW-0067">ATP-binding</keyword>
<keyword id="KW-0347">Helicase</keyword>
<keyword id="KW-0945">Host-virus interaction</keyword>
<keyword id="KW-0378">Hydrolase</keyword>
<keyword id="KW-1090">Inhibition of host innate immune response by virus</keyword>
<keyword id="KW-0547">Nucleotide-binding</keyword>
<keyword id="KW-0548">Nucleotidyltransferase</keyword>
<keyword id="KW-1185">Reference proteome</keyword>
<keyword id="KW-1159">RNA suppression of termination</keyword>
<keyword id="KW-0696">RNA-directed RNA polymerase</keyword>
<keyword id="KW-0941">Suppressor of RNA silencing</keyword>
<keyword id="KW-0808">Transferase</keyword>
<keyword id="KW-0899">Viral immunoevasion</keyword>
<keyword id="KW-0693">Viral RNA replication</keyword>
<evidence type="ECO:0000250" key="1"/>
<evidence type="ECO:0000255" key="2"/>
<evidence type="ECO:0000255" key="3">
    <source>
        <dbReference type="PROSITE-ProRule" id="PRU00539"/>
    </source>
</evidence>
<evidence type="ECO:0000255" key="4">
    <source>
        <dbReference type="PROSITE-ProRule" id="PRU01079"/>
    </source>
</evidence>
<evidence type="ECO:0000305" key="5"/>
<protein>
    <recommendedName>
        <fullName>Replicase large subunit</fullName>
        <ecNumber>2.1.1.-</ecNumber>
        <ecNumber>2.7.7.-</ecNumber>
        <ecNumber>2.7.7.48</ecNumber>
        <ecNumber>3.6.4.13</ecNumber>
    </recommendedName>
    <alternativeName>
        <fullName>183 kDa protein</fullName>
    </alternativeName>
    <alternativeName>
        <fullName>RNA-directed RNA polymerase</fullName>
    </alternativeName>
    <component>
        <recommendedName>
            <fullName>Replicase small subunit</fullName>
            <ecNumber>2.1.1.-</ecNumber>
            <ecNumber>2.7.7.-</ecNumber>
            <ecNumber>3.6.4.13</ecNumber>
        </recommendedName>
        <alternativeName>
            <fullName>126 kDa protein</fullName>
        </alternativeName>
        <alternativeName>
            <fullName>Methyltransferase/RNA helicase</fullName>
            <shortName>MT/HEL</shortName>
        </alternativeName>
    </component>
</protein>
<reference key="1">
    <citation type="journal article" date="1996" name="Virus Genes">
        <title>Completion of the nucleotide sequence of sunn-hemp mosaic virus: a tobamovirus pathogenic to legumes.</title>
        <authorList>
            <person name="Silver S."/>
            <person name="Quan S."/>
            <person name="Deom C.M."/>
        </authorList>
    </citation>
    <scope>NUCLEOTIDE SEQUENCE [MRNA] OF 1-1536</scope>
</reference>
<reference key="2">
    <citation type="journal article" date="1982" name="Nucleic Acids Res.">
        <title>Nucleotide sequence of the 30K protein cistron of cowpea strain of tobacco mosaic virus.</title>
        <authorList>
            <person name="Meshi T."/>
            <person name="Ohno T."/>
            <person name="Okada Y."/>
        </authorList>
    </citation>
    <scope>NUCLEOTIDE SEQUENCE OF 1538-1629</scope>
</reference>
<sequence>MSTSTLINKAQTNSCGDVGVVDLLKRKVYDDTVKTMQGLDRRAKYRLNQCLGPEQCRTVRGGYPEFQIEFTGASNTSHAMAAGLRGLELEYLYTLVPYGAVSYDIGGNFPAHMMKGRSYVHCCNPALDARDLARNENYRISIENYLSRFEDKSGDYCQWQRKKPKVSKPLPRYQKACFDRYNEDPEHVTCSETFEKCRISPPAERDDIYATSLHSLYDIPYQNLGPALARKRIKVLHAAFHFSEDLLLGASEGLLTQIGGTFQRNGDVLTFSFLDESSLIYTHSFRNVFEYVTRTFFVACNRYAYMKEFRSRRVDTVFCSFIRIDTYCLYRSVFKDCDEHVFAAMDDAWEFKKKRVMLEASRPIFNDVAQFNVYFPNAKDKVCLPIFAVKSVSGAPVTTRHILVEKDFYWTALNHILTYPDGKADFRGVMSFLESIRSRVVINGTTTASQWEVDKSQLKDIALSLLLIAKLEKLKISVIEKRIKIERQGLVSLLKEFLHGLLDEYTQTMAEWVVEKGWVKSVDQVLQVTIPDLVLNFRDHFRCEFRTSANVSEVNVSEHLVATNEYYAKVSDLVDRNPTLAFDFEKFQDYCEKLGVDIDTVTELIDAISTGRAGITLDHTDDKEEQLPRTLAGSSSYLEEEPSDDLVCLSDKAIVNRSTILGELKNNVVIFEGTLPKNSVFVSAPDDPSVTIELSELHARPVSDFLSMQKPVNIVYTGEVQICQMQNYLDYLSASLVACISNLKKYLQDQWLNPGEKFQKIGVWDNLNNKWIVVPQKKKYAWGLAADVDGNQKTVILNYDEHGMPILEKSYVRLVVSTDTYLFTVVSMLGYLRHLDQKKPTATITLVDGVPGCGKTQEILSRFDANSDLILVQGREACEMIRRRANDNVPGSATKENVRTFDSFVMNRKPGKFKTLWVDEGLMVHPGLINFCINISCVSSVYIFGDRKQIPFINRVMNFSIPDNLAKLYYDEIVSRDTTKRCPLDVTHFLNSVYEKRVMSYSNVQRSLECKMISGKAKINDYRSILAEGKLLTFTQEDKEYLLKAGFKDVNTVHEAQGETYRDVNLIRVTATPLTIVSAGSPHVTVALSRHTNRFVYYTVVPDVVMTTVQKTQCVSNFLLDMYAVAYTQKXQLQISPFYTHDIPFVETNKVGQISDLQYFYDSWLPGNSFVQNNHDQWSIISSDINLHSEAVRLDMNKRHIPRTKGEFLRPLLNTAVEPPRIPGLLENLLALIKRNFNAPDLAGQLDYDFLSRKVCDGFFGKLLPPDVEASELLRLPVDHMYSVQNFDDWLNKQEPGVVGQLANWDHIGMPAADQYRHMIKRTPKAKLDLSIQSEYPALQTIVYHSKHVNAVFGPIFSCLTERLLSVVDPLRFKFFTRTTPADLEFFFRDMVVGDMEILELDISKYDKSQNKFHFEVEMRIWEMLGIDKYIEKVWENGHRKTHLRDYTAGIKTVIEYQRKSGDVTTFIGNTIIIAACLCSILPMEKVFKAGFCGDDSIIYLPRNLLYPDIQSVSNNMWNFEAKLFKKLHGYFCGRYXLRNGRYLRLLPDPLKIITKLGCKAIKDWDHLEEFRISMFDMACEYKNCFGFDVLESAVKESFPKAEGCNVAFCAIYKFLSNKYLFRTLFSDV</sequence>
<feature type="chain" id="PRO_0000041184" description="Replicase large subunit">
    <location>
        <begin position="1"/>
        <end position="1629"/>
    </location>
</feature>
<feature type="chain" id="PRO_0000041185" description="Replicase small subunit">
    <location>
        <begin position="1"/>
        <end position="1130"/>
    </location>
</feature>
<feature type="domain" description="Alphavirus-like MT" evidence="4">
    <location>
        <begin position="69"/>
        <end position="292"/>
    </location>
</feature>
<feature type="domain" description="(+)RNA virus helicase ATP-binding">
    <location>
        <begin position="821"/>
        <end position="976"/>
    </location>
</feature>
<feature type="domain" description="(+)RNA virus helicase C-terminal">
    <location>
        <begin position="977"/>
        <end position="1130"/>
    </location>
</feature>
<feature type="domain" description="RdRp catalytic" evidence="3">
    <location>
        <begin position="1396"/>
        <end position="1509"/>
    </location>
</feature>
<feature type="region of interest" description="Methyltransferase">
    <location>
        <begin position="48"/>
        <end position="473"/>
    </location>
</feature>
<feature type="region of interest" description="Helicase">
    <location>
        <begin position="845"/>
        <end position="1099"/>
    </location>
</feature>
<feature type="binding site" evidence="2">
    <location>
        <begin position="849"/>
        <end position="856"/>
    </location>
    <ligand>
        <name>ATP</name>
        <dbReference type="ChEBI" id="CHEBI:30616"/>
    </ligand>
</feature>
<proteinExistence type="evidence at transcript level"/>
<organism>
    <name type="scientific">Sunn-hemp mosaic virus</name>
    <name type="common">SHMV</name>
    <name type="synonym">TMV strain cowpea</name>
    <dbReference type="NCBI Taxonomy" id="12240"/>
    <lineage>
        <taxon>Viruses</taxon>
        <taxon>Riboviria</taxon>
        <taxon>Orthornavirae</taxon>
        <taxon>Kitrinoviricota</taxon>
        <taxon>Alsuviricetes</taxon>
        <taxon>Martellivirales</taxon>
        <taxon>Virgaviridae</taxon>
        <taxon>Tobamovirus</taxon>
    </lineage>
</organism>
<comment type="function">
    <molecule>Replicase large subunit</molecule>
    <text>Is an RNA-dependent RNA polymerase active in viral RNA replication.</text>
</comment>
<comment type="function">
    <molecule>Replicase small subunit</molecule>
    <text evidence="1 5">Is a methyltransferase active in RNA capping and an RNA helicase. Methyltransferase displays a cytoplasmic capping enzyme activity. This function is necessary since all viral RNAs are synthesized in the cytoplasm, and host capping enzymes are restricted to the nucleus. Helicase region probably exhibits NTPase and RNA unwinding activities (Potential). It also acts as a suppressor of RNA-mediated gene silencing, also known as post-transcriptional gene silencing (PTGS), a mechanism of plant viral defense that limits the accumulation of viral RNAs. May mediate silencing suppression through either inhibition of HEN1-mediated siRNA or siRNA demethylation (By similarity).</text>
</comment>
<comment type="catalytic activity">
    <reaction evidence="3">
        <text>RNA(n) + a ribonucleoside 5'-triphosphate = RNA(n+1) + diphosphate</text>
        <dbReference type="Rhea" id="RHEA:21248"/>
        <dbReference type="Rhea" id="RHEA-COMP:14527"/>
        <dbReference type="Rhea" id="RHEA-COMP:17342"/>
        <dbReference type="ChEBI" id="CHEBI:33019"/>
        <dbReference type="ChEBI" id="CHEBI:61557"/>
        <dbReference type="ChEBI" id="CHEBI:140395"/>
        <dbReference type="EC" id="2.7.7.48"/>
    </reaction>
</comment>
<comment type="catalytic activity">
    <reaction>
        <text>ATP + H2O = ADP + phosphate + H(+)</text>
        <dbReference type="Rhea" id="RHEA:13065"/>
        <dbReference type="ChEBI" id="CHEBI:15377"/>
        <dbReference type="ChEBI" id="CHEBI:15378"/>
        <dbReference type="ChEBI" id="CHEBI:30616"/>
        <dbReference type="ChEBI" id="CHEBI:43474"/>
        <dbReference type="ChEBI" id="CHEBI:456216"/>
        <dbReference type="EC" id="3.6.4.13"/>
    </reaction>
</comment>
<comment type="subunit">
    <text evidence="1">Heterodimer of a large and a small subunit.</text>
</comment>
<comment type="miscellaneous">
    <text>This protein is translated as a fusion protein by episodic readthrough of a termination codon. When readthrough of the terminator codon TGA occurs between the codons for Lys-1130 and Gln-1132, this results in the addition of the RdRp region to the replicase.</text>
</comment>
<comment type="similarity">
    <text evidence="5">Belongs to the ssRNA positive-strand viruses RNA-directed RNA polymerase family.</text>
</comment>
<name>RDRP_SHMV</name>